<reference key="1">
    <citation type="journal article" date="2008" name="Appl. Environ. Microbiol.">
        <title>Genome of the epsilonproteobacterial chemolithoautotroph Sulfurimonas denitrificans.</title>
        <authorList>
            <person name="Sievert S.M."/>
            <person name="Scott K.M."/>
            <person name="Klotz M.G."/>
            <person name="Chain P.S.G."/>
            <person name="Hauser L.J."/>
            <person name="Hemp J."/>
            <person name="Huegler M."/>
            <person name="Land M."/>
            <person name="Lapidus A."/>
            <person name="Larimer F.W."/>
            <person name="Lucas S."/>
            <person name="Malfatti S.A."/>
            <person name="Meyer F."/>
            <person name="Paulsen I.T."/>
            <person name="Ren Q."/>
            <person name="Simon J."/>
            <person name="Bailey K."/>
            <person name="Diaz E."/>
            <person name="Fitzpatrick K.A."/>
            <person name="Glover B."/>
            <person name="Gwatney N."/>
            <person name="Korajkic A."/>
            <person name="Long A."/>
            <person name="Mobberley J.M."/>
            <person name="Pantry S.N."/>
            <person name="Pazder G."/>
            <person name="Peterson S."/>
            <person name="Quintanilla J.D."/>
            <person name="Sprinkle R."/>
            <person name="Stephens J."/>
            <person name="Thomas P."/>
            <person name="Vaughn R."/>
            <person name="Weber M.J."/>
            <person name="Wooten L.L."/>
        </authorList>
    </citation>
    <scope>NUCLEOTIDE SEQUENCE [LARGE SCALE GENOMIC DNA]</scope>
    <source>
        <strain>ATCC 33889 / DSM 1251</strain>
    </source>
</reference>
<sequence>MFLLKSIPQVDKFIKNEKFASLPLTLLVQITAEVLQDLRERILKNEIESFSEDELVKKVLQKYKDITKPSLQKIINATGVIVHTNLGRSLIDANAFERVKGIVTSYNNLEYDLEKGKRGERYSHISDAICRLLGCEDVLIVNNNASAVFLILNTFAKQKEVVVSRGELVEIGGSFRVPDVMKQSGAKLVEVGATNKTHLYDYENAISKKTSMLMKVHKSNYSIEGFSSEVEFKELVKLAREKNLIDYYDMGSGHLVNLPYGLDQHEPSVLKYMQENPSLLSFSGDKLLGSVQAGIIVGKKEYIAKLKKNQLLRMLRVDKLTLALLEDSVISVLLNKLDEIPTLKMLFASTCELKENALVLQDAIKDICDCEVLETKTVIGGGTTPNKMIPSIALAIKIDNYKQNKMEKLFRAKNIIGRIENDRFLLDFRTIRKSEIQEIAHVVKEIANV</sequence>
<keyword id="KW-0963">Cytoplasm</keyword>
<keyword id="KW-0648">Protein biosynthesis</keyword>
<keyword id="KW-0663">Pyridoxal phosphate</keyword>
<keyword id="KW-1185">Reference proteome</keyword>
<keyword id="KW-0711">Selenium</keyword>
<keyword id="KW-0808">Transferase</keyword>
<gene>
    <name evidence="1" type="primary">selA</name>
    <name type="ordered locus">Suden_0831</name>
</gene>
<feature type="chain" id="PRO_1000050385" description="L-seryl-tRNA(Sec) selenium transferase">
    <location>
        <begin position="1"/>
        <end position="449"/>
    </location>
</feature>
<feature type="modified residue" description="N6-(pyridoxal phosphate)lysine" evidence="1">
    <location>
        <position position="286"/>
    </location>
</feature>
<dbReference type="EC" id="2.9.1.1" evidence="1"/>
<dbReference type="EMBL" id="CP000153">
    <property type="protein sequence ID" value="ABB44110.1"/>
    <property type="molecule type" value="Genomic_DNA"/>
</dbReference>
<dbReference type="RefSeq" id="WP_011372462.1">
    <property type="nucleotide sequence ID" value="NC_007575.1"/>
</dbReference>
<dbReference type="SMR" id="Q30SC1"/>
<dbReference type="STRING" id="326298.Suden_0831"/>
<dbReference type="KEGG" id="tdn:Suden_0831"/>
<dbReference type="eggNOG" id="COG1921">
    <property type="taxonomic scope" value="Bacteria"/>
</dbReference>
<dbReference type="HOGENOM" id="CLU_038142_1_0_7"/>
<dbReference type="OrthoDB" id="9787096at2"/>
<dbReference type="UniPathway" id="UPA00906">
    <property type="reaction ID" value="UER00896"/>
</dbReference>
<dbReference type="Proteomes" id="UP000002714">
    <property type="component" value="Chromosome"/>
</dbReference>
<dbReference type="GO" id="GO:0005737">
    <property type="term" value="C:cytoplasm"/>
    <property type="evidence" value="ECO:0007669"/>
    <property type="project" value="UniProtKB-SubCell"/>
</dbReference>
<dbReference type="GO" id="GO:0004125">
    <property type="term" value="F:L-seryl-tRNA(Sec) selenium transferase activity"/>
    <property type="evidence" value="ECO:0007669"/>
    <property type="project" value="UniProtKB-UniRule"/>
</dbReference>
<dbReference type="GO" id="GO:0001717">
    <property type="term" value="P:conversion of seryl-tRNAsec to selenocys-tRNAsec"/>
    <property type="evidence" value="ECO:0007669"/>
    <property type="project" value="UniProtKB-UniRule"/>
</dbReference>
<dbReference type="GO" id="GO:0001514">
    <property type="term" value="P:selenocysteine incorporation"/>
    <property type="evidence" value="ECO:0007669"/>
    <property type="project" value="UniProtKB-UniRule"/>
</dbReference>
<dbReference type="Gene3D" id="3.90.1150.180">
    <property type="match status" value="1"/>
</dbReference>
<dbReference type="Gene3D" id="3.40.640.10">
    <property type="entry name" value="Type I PLP-dependent aspartate aminotransferase-like (Major domain)"/>
    <property type="match status" value="1"/>
</dbReference>
<dbReference type="HAMAP" id="MF_00423">
    <property type="entry name" value="SelA"/>
    <property type="match status" value="1"/>
</dbReference>
<dbReference type="InterPro" id="IPR015424">
    <property type="entry name" value="PyrdxlP-dep_Trfase"/>
</dbReference>
<dbReference type="InterPro" id="IPR015421">
    <property type="entry name" value="PyrdxlP-dep_Trfase_major"/>
</dbReference>
<dbReference type="InterPro" id="IPR018319">
    <property type="entry name" value="SelA-like"/>
</dbReference>
<dbReference type="InterPro" id="IPR004534">
    <property type="entry name" value="SelA_trans"/>
</dbReference>
<dbReference type="NCBIfam" id="TIGR00474">
    <property type="entry name" value="selA"/>
    <property type="match status" value="1"/>
</dbReference>
<dbReference type="PANTHER" id="PTHR32328">
    <property type="entry name" value="L-SERYL-TRNA(SEC) SELENIUM TRANSFERASE"/>
    <property type="match status" value="1"/>
</dbReference>
<dbReference type="PANTHER" id="PTHR32328:SF0">
    <property type="entry name" value="L-SERYL-TRNA(SEC) SELENIUM TRANSFERASE"/>
    <property type="match status" value="1"/>
</dbReference>
<dbReference type="Pfam" id="PF03841">
    <property type="entry name" value="SelA"/>
    <property type="match status" value="1"/>
</dbReference>
<dbReference type="SUPFAM" id="SSF53383">
    <property type="entry name" value="PLP-dependent transferases"/>
    <property type="match status" value="1"/>
</dbReference>
<name>SELA_SULDN</name>
<protein>
    <recommendedName>
        <fullName evidence="1">L-seryl-tRNA(Sec) selenium transferase</fullName>
        <ecNumber evidence="1">2.9.1.1</ecNumber>
    </recommendedName>
    <alternativeName>
        <fullName evidence="1">Selenocysteine synthase</fullName>
        <shortName evidence="1">Sec synthase</shortName>
    </alternativeName>
    <alternativeName>
        <fullName evidence="1">Selenocysteinyl-tRNA(Sec) synthase</fullName>
    </alternativeName>
</protein>
<proteinExistence type="inferred from homology"/>
<evidence type="ECO:0000255" key="1">
    <source>
        <dbReference type="HAMAP-Rule" id="MF_00423"/>
    </source>
</evidence>
<accession>Q30SC1</accession>
<organism>
    <name type="scientific">Sulfurimonas denitrificans (strain ATCC 33889 / DSM 1251)</name>
    <name type="common">Thiomicrospira denitrificans (strain ATCC 33889 / DSM 1251)</name>
    <dbReference type="NCBI Taxonomy" id="326298"/>
    <lineage>
        <taxon>Bacteria</taxon>
        <taxon>Pseudomonadati</taxon>
        <taxon>Campylobacterota</taxon>
        <taxon>Epsilonproteobacteria</taxon>
        <taxon>Campylobacterales</taxon>
        <taxon>Sulfurimonadaceae</taxon>
        <taxon>Sulfurimonas</taxon>
    </lineage>
</organism>
<comment type="function">
    <text evidence="1">Converts seryl-tRNA(Sec) to selenocysteinyl-tRNA(Sec) required for selenoprotein biosynthesis.</text>
</comment>
<comment type="catalytic activity">
    <reaction evidence="1">
        <text>L-seryl-tRNA(Sec) + selenophosphate + H(+) = L-selenocysteinyl-tRNA(Sec) + phosphate</text>
        <dbReference type="Rhea" id="RHEA:22728"/>
        <dbReference type="Rhea" id="RHEA-COMP:9742"/>
        <dbReference type="Rhea" id="RHEA-COMP:9743"/>
        <dbReference type="ChEBI" id="CHEBI:15378"/>
        <dbReference type="ChEBI" id="CHEBI:16144"/>
        <dbReference type="ChEBI" id="CHEBI:43474"/>
        <dbReference type="ChEBI" id="CHEBI:78533"/>
        <dbReference type="ChEBI" id="CHEBI:78573"/>
        <dbReference type="EC" id="2.9.1.1"/>
    </reaction>
</comment>
<comment type="cofactor">
    <cofactor evidence="1">
        <name>pyridoxal 5'-phosphate</name>
        <dbReference type="ChEBI" id="CHEBI:597326"/>
    </cofactor>
</comment>
<comment type="pathway">
    <text evidence="1">Aminoacyl-tRNA biosynthesis; selenocysteinyl-tRNA(Sec) biosynthesis; selenocysteinyl-tRNA(Sec) from L-seryl-tRNA(Sec) (bacterial route): step 1/1.</text>
</comment>
<comment type="subcellular location">
    <subcellularLocation>
        <location evidence="1">Cytoplasm</location>
    </subcellularLocation>
</comment>
<comment type="similarity">
    <text evidence="1">Belongs to the SelA family.</text>
</comment>